<organism>
    <name type="scientific">Shewanella sediminis (strain HAW-EB3)</name>
    <dbReference type="NCBI Taxonomy" id="425104"/>
    <lineage>
        <taxon>Bacteria</taxon>
        <taxon>Pseudomonadati</taxon>
        <taxon>Pseudomonadota</taxon>
        <taxon>Gammaproteobacteria</taxon>
        <taxon>Alteromonadales</taxon>
        <taxon>Shewanellaceae</taxon>
        <taxon>Shewanella</taxon>
    </lineage>
</organism>
<evidence type="ECO:0000255" key="1">
    <source>
        <dbReference type="PROSITE-ProRule" id="PRU01182"/>
    </source>
</evidence>
<evidence type="ECO:0000305" key="2"/>
<comment type="similarity">
    <text evidence="2">Belongs to the UPF0758 family.</text>
</comment>
<dbReference type="EMBL" id="CP000821">
    <property type="protein sequence ID" value="ABV34998.1"/>
    <property type="molecule type" value="Genomic_DNA"/>
</dbReference>
<dbReference type="RefSeq" id="WP_012140736.1">
    <property type="nucleotide sequence ID" value="NC_009831.1"/>
</dbReference>
<dbReference type="SMR" id="A8FQ75"/>
<dbReference type="STRING" id="425104.Ssed_0385"/>
<dbReference type="KEGG" id="sse:Ssed_0385"/>
<dbReference type="eggNOG" id="COG2003">
    <property type="taxonomic scope" value="Bacteria"/>
</dbReference>
<dbReference type="HOGENOM" id="CLU_073529_0_1_6"/>
<dbReference type="OrthoDB" id="9804482at2"/>
<dbReference type="Proteomes" id="UP000002015">
    <property type="component" value="Chromosome"/>
</dbReference>
<dbReference type="GO" id="GO:0046872">
    <property type="term" value="F:metal ion binding"/>
    <property type="evidence" value="ECO:0007669"/>
    <property type="project" value="UniProtKB-KW"/>
</dbReference>
<dbReference type="GO" id="GO:0008237">
    <property type="term" value="F:metallopeptidase activity"/>
    <property type="evidence" value="ECO:0007669"/>
    <property type="project" value="UniProtKB-KW"/>
</dbReference>
<dbReference type="GO" id="GO:0006508">
    <property type="term" value="P:proteolysis"/>
    <property type="evidence" value="ECO:0007669"/>
    <property type="project" value="UniProtKB-KW"/>
</dbReference>
<dbReference type="CDD" id="cd08071">
    <property type="entry name" value="MPN_DUF2466"/>
    <property type="match status" value="1"/>
</dbReference>
<dbReference type="FunFam" id="3.40.140.10:FF:000032">
    <property type="entry name" value="DNA repair protein RadC"/>
    <property type="match status" value="1"/>
</dbReference>
<dbReference type="Gene3D" id="1.10.150.20">
    <property type="entry name" value="5' to 3' exonuclease, C-terminal subdomain"/>
    <property type="match status" value="1"/>
</dbReference>
<dbReference type="Gene3D" id="3.40.140.10">
    <property type="entry name" value="Cytidine Deaminase, domain 2"/>
    <property type="match status" value="1"/>
</dbReference>
<dbReference type="InterPro" id="IPR037518">
    <property type="entry name" value="MPN"/>
</dbReference>
<dbReference type="InterPro" id="IPR025657">
    <property type="entry name" value="RadC_JAB"/>
</dbReference>
<dbReference type="InterPro" id="IPR010994">
    <property type="entry name" value="RuvA_2-like"/>
</dbReference>
<dbReference type="InterPro" id="IPR001405">
    <property type="entry name" value="UPF0758"/>
</dbReference>
<dbReference type="InterPro" id="IPR020891">
    <property type="entry name" value="UPF0758_CS"/>
</dbReference>
<dbReference type="InterPro" id="IPR046778">
    <property type="entry name" value="UPF0758_N"/>
</dbReference>
<dbReference type="NCBIfam" id="NF000642">
    <property type="entry name" value="PRK00024.1"/>
    <property type="match status" value="1"/>
</dbReference>
<dbReference type="NCBIfam" id="TIGR00608">
    <property type="entry name" value="radc"/>
    <property type="match status" value="1"/>
</dbReference>
<dbReference type="PANTHER" id="PTHR30471">
    <property type="entry name" value="DNA REPAIR PROTEIN RADC"/>
    <property type="match status" value="1"/>
</dbReference>
<dbReference type="PANTHER" id="PTHR30471:SF3">
    <property type="entry name" value="UPF0758 PROTEIN YEES-RELATED"/>
    <property type="match status" value="1"/>
</dbReference>
<dbReference type="Pfam" id="PF04002">
    <property type="entry name" value="RadC"/>
    <property type="match status" value="1"/>
</dbReference>
<dbReference type="Pfam" id="PF20582">
    <property type="entry name" value="UPF0758_N"/>
    <property type="match status" value="1"/>
</dbReference>
<dbReference type="SUPFAM" id="SSF102712">
    <property type="entry name" value="JAB1/MPN domain"/>
    <property type="match status" value="1"/>
</dbReference>
<dbReference type="SUPFAM" id="SSF47781">
    <property type="entry name" value="RuvA domain 2-like"/>
    <property type="match status" value="1"/>
</dbReference>
<dbReference type="PROSITE" id="PS50249">
    <property type="entry name" value="MPN"/>
    <property type="match status" value="1"/>
</dbReference>
<dbReference type="PROSITE" id="PS01302">
    <property type="entry name" value="UPF0758"/>
    <property type="match status" value="1"/>
</dbReference>
<keyword id="KW-0378">Hydrolase</keyword>
<keyword id="KW-0479">Metal-binding</keyword>
<keyword id="KW-0482">Metalloprotease</keyword>
<keyword id="KW-0645">Protease</keyword>
<keyword id="KW-1185">Reference proteome</keyword>
<keyword id="KW-0862">Zinc</keyword>
<accession>A8FQ75</accession>
<name>Y385_SHESH</name>
<protein>
    <recommendedName>
        <fullName>UPF0758 protein Ssed_0385</fullName>
    </recommendedName>
</protein>
<gene>
    <name type="ordered locus">Ssed_0385</name>
</gene>
<reference key="1">
    <citation type="submission" date="2007-08" db="EMBL/GenBank/DDBJ databases">
        <title>Complete sequence of Shewanella sediminis HAW-EB3.</title>
        <authorList>
            <consortium name="US DOE Joint Genome Institute"/>
            <person name="Copeland A."/>
            <person name="Lucas S."/>
            <person name="Lapidus A."/>
            <person name="Barry K."/>
            <person name="Glavina del Rio T."/>
            <person name="Dalin E."/>
            <person name="Tice H."/>
            <person name="Pitluck S."/>
            <person name="Chertkov O."/>
            <person name="Brettin T."/>
            <person name="Bruce D."/>
            <person name="Detter J.C."/>
            <person name="Han C."/>
            <person name="Schmutz J."/>
            <person name="Larimer F."/>
            <person name="Land M."/>
            <person name="Hauser L."/>
            <person name="Kyrpides N."/>
            <person name="Kim E."/>
            <person name="Zhao J.-S."/>
            <person name="Richardson P."/>
        </authorList>
    </citation>
    <scope>NUCLEOTIDE SEQUENCE [LARGE SCALE GENOMIC DNA]</scope>
    <source>
        <strain>HAW-EB3</strain>
    </source>
</reference>
<proteinExistence type="inferred from homology"/>
<sequence>MGIKDWPDGEGPREKLLKLGVGPLSDAELLAVVLRNGVQGLSAVELARNLIGQFGGLRELLTASEIEVCRMPGMGPVKFAQLQAAAELSKRISQQNLKRGKILSDPDLTRDYLMRQLADRAYEVFAILLLDSQHRVIQFVELFRGTIDSASVYPRDVVCLVLEKKAAAVIVCHNHPSGVAEPSLADRRITERLKFALETIDVSLLDHMVVGDREIVSFAERGWID</sequence>
<feature type="chain" id="PRO_1000074154" description="UPF0758 protein Ssed_0385">
    <location>
        <begin position="1"/>
        <end position="225"/>
    </location>
</feature>
<feature type="domain" description="MPN" evidence="1">
    <location>
        <begin position="102"/>
        <end position="224"/>
    </location>
</feature>
<feature type="short sequence motif" description="JAMM motif" evidence="1">
    <location>
        <begin position="173"/>
        <end position="186"/>
    </location>
</feature>
<feature type="binding site" evidence="1">
    <location>
        <position position="173"/>
    </location>
    <ligand>
        <name>Zn(2+)</name>
        <dbReference type="ChEBI" id="CHEBI:29105"/>
        <note>catalytic</note>
    </ligand>
</feature>
<feature type="binding site" evidence="1">
    <location>
        <position position="175"/>
    </location>
    <ligand>
        <name>Zn(2+)</name>
        <dbReference type="ChEBI" id="CHEBI:29105"/>
        <note>catalytic</note>
    </ligand>
</feature>
<feature type="binding site" evidence="1">
    <location>
        <position position="186"/>
    </location>
    <ligand>
        <name>Zn(2+)</name>
        <dbReference type="ChEBI" id="CHEBI:29105"/>
        <note>catalytic</note>
    </ligand>
</feature>